<comment type="catalytic activity">
    <reaction evidence="1">
        <text>L-citrulline + L-aspartate + ATP = 2-(N(omega)-L-arginino)succinate + AMP + diphosphate + H(+)</text>
        <dbReference type="Rhea" id="RHEA:10932"/>
        <dbReference type="ChEBI" id="CHEBI:15378"/>
        <dbReference type="ChEBI" id="CHEBI:29991"/>
        <dbReference type="ChEBI" id="CHEBI:30616"/>
        <dbReference type="ChEBI" id="CHEBI:33019"/>
        <dbReference type="ChEBI" id="CHEBI:57472"/>
        <dbReference type="ChEBI" id="CHEBI:57743"/>
        <dbReference type="ChEBI" id="CHEBI:456215"/>
        <dbReference type="EC" id="6.3.4.5"/>
    </reaction>
</comment>
<comment type="pathway">
    <text evidence="1">Amino-acid biosynthesis; L-arginine biosynthesis; L-arginine from L-ornithine and carbamoyl phosphate: step 2/3.</text>
</comment>
<comment type="subunit">
    <text evidence="1">Homotetramer.</text>
</comment>
<comment type="subcellular location">
    <subcellularLocation>
        <location evidence="1">Cytoplasm</location>
    </subcellularLocation>
</comment>
<comment type="similarity">
    <text evidence="1">Belongs to the argininosuccinate synthase family. Type 1 subfamily.</text>
</comment>
<name>ASSY_THEVB</name>
<organism>
    <name type="scientific">Thermosynechococcus vestitus (strain NIES-2133 / IAM M-273 / BP-1)</name>
    <dbReference type="NCBI Taxonomy" id="197221"/>
    <lineage>
        <taxon>Bacteria</taxon>
        <taxon>Bacillati</taxon>
        <taxon>Cyanobacteriota</taxon>
        <taxon>Cyanophyceae</taxon>
        <taxon>Acaryochloridales</taxon>
        <taxon>Thermosynechococcaceae</taxon>
        <taxon>Thermosynechococcus</taxon>
    </lineage>
</organism>
<accession>Q8DKY7</accession>
<dbReference type="EC" id="6.3.4.5" evidence="1"/>
<dbReference type="EMBL" id="BA000039">
    <property type="protein sequence ID" value="BAC08263.1"/>
    <property type="molecule type" value="Genomic_DNA"/>
</dbReference>
<dbReference type="RefSeq" id="NP_681501.1">
    <property type="nucleotide sequence ID" value="NC_004113.1"/>
</dbReference>
<dbReference type="RefSeq" id="WP_011056559.1">
    <property type="nucleotide sequence ID" value="NC_004113.1"/>
</dbReference>
<dbReference type="SMR" id="Q8DKY7"/>
<dbReference type="STRING" id="197221.gene:10747302"/>
<dbReference type="EnsemblBacteria" id="BAC08263">
    <property type="protein sequence ID" value="BAC08263"/>
    <property type="gene ID" value="BAC08263"/>
</dbReference>
<dbReference type="KEGG" id="tel:tlr0712"/>
<dbReference type="PATRIC" id="fig|197221.4.peg.752"/>
<dbReference type="eggNOG" id="COG0137">
    <property type="taxonomic scope" value="Bacteria"/>
</dbReference>
<dbReference type="UniPathway" id="UPA00068">
    <property type="reaction ID" value="UER00113"/>
</dbReference>
<dbReference type="Proteomes" id="UP000000440">
    <property type="component" value="Chromosome"/>
</dbReference>
<dbReference type="GO" id="GO:0005737">
    <property type="term" value="C:cytoplasm"/>
    <property type="evidence" value="ECO:0007669"/>
    <property type="project" value="UniProtKB-SubCell"/>
</dbReference>
<dbReference type="GO" id="GO:0004055">
    <property type="term" value="F:argininosuccinate synthase activity"/>
    <property type="evidence" value="ECO:0007669"/>
    <property type="project" value="UniProtKB-UniRule"/>
</dbReference>
<dbReference type="GO" id="GO:0005524">
    <property type="term" value="F:ATP binding"/>
    <property type="evidence" value="ECO:0007669"/>
    <property type="project" value="UniProtKB-UniRule"/>
</dbReference>
<dbReference type="GO" id="GO:0000053">
    <property type="term" value="P:argininosuccinate metabolic process"/>
    <property type="evidence" value="ECO:0007669"/>
    <property type="project" value="TreeGrafter"/>
</dbReference>
<dbReference type="GO" id="GO:0006526">
    <property type="term" value="P:L-arginine biosynthetic process"/>
    <property type="evidence" value="ECO:0007669"/>
    <property type="project" value="UniProtKB-UniRule"/>
</dbReference>
<dbReference type="GO" id="GO:0000050">
    <property type="term" value="P:urea cycle"/>
    <property type="evidence" value="ECO:0007669"/>
    <property type="project" value="TreeGrafter"/>
</dbReference>
<dbReference type="CDD" id="cd01999">
    <property type="entry name" value="ASS"/>
    <property type="match status" value="1"/>
</dbReference>
<dbReference type="FunFam" id="3.40.50.620:FF:000038">
    <property type="entry name" value="Argininosuccinate synthase"/>
    <property type="match status" value="1"/>
</dbReference>
<dbReference type="FunFam" id="3.90.1260.10:FF:000007">
    <property type="entry name" value="Argininosuccinate synthase"/>
    <property type="match status" value="1"/>
</dbReference>
<dbReference type="Gene3D" id="3.90.1260.10">
    <property type="entry name" value="Argininosuccinate synthetase, chain A, domain 2"/>
    <property type="match status" value="1"/>
</dbReference>
<dbReference type="Gene3D" id="3.40.50.620">
    <property type="entry name" value="HUPs"/>
    <property type="match status" value="1"/>
</dbReference>
<dbReference type="Gene3D" id="1.20.5.470">
    <property type="entry name" value="Single helix bin"/>
    <property type="match status" value="1"/>
</dbReference>
<dbReference type="HAMAP" id="MF_00005">
    <property type="entry name" value="Arg_succ_synth_type1"/>
    <property type="match status" value="1"/>
</dbReference>
<dbReference type="InterPro" id="IPR048268">
    <property type="entry name" value="Arginosuc_syn_C"/>
</dbReference>
<dbReference type="InterPro" id="IPR048267">
    <property type="entry name" value="Arginosuc_syn_N"/>
</dbReference>
<dbReference type="InterPro" id="IPR001518">
    <property type="entry name" value="Arginosuc_synth"/>
</dbReference>
<dbReference type="InterPro" id="IPR018223">
    <property type="entry name" value="Arginosuc_synth_CS"/>
</dbReference>
<dbReference type="InterPro" id="IPR023434">
    <property type="entry name" value="Arginosuc_synth_type_1_subfam"/>
</dbReference>
<dbReference type="InterPro" id="IPR024074">
    <property type="entry name" value="AS_cat/multimer_dom_body"/>
</dbReference>
<dbReference type="InterPro" id="IPR014729">
    <property type="entry name" value="Rossmann-like_a/b/a_fold"/>
</dbReference>
<dbReference type="NCBIfam" id="TIGR00032">
    <property type="entry name" value="argG"/>
    <property type="match status" value="1"/>
</dbReference>
<dbReference type="NCBIfam" id="NF001770">
    <property type="entry name" value="PRK00509.1"/>
    <property type="match status" value="1"/>
</dbReference>
<dbReference type="PANTHER" id="PTHR11587">
    <property type="entry name" value="ARGININOSUCCINATE SYNTHASE"/>
    <property type="match status" value="1"/>
</dbReference>
<dbReference type="PANTHER" id="PTHR11587:SF2">
    <property type="entry name" value="ARGININOSUCCINATE SYNTHASE"/>
    <property type="match status" value="1"/>
</dbReference>
<dbReference type="Pfam" id="PF20979">
    <property type="entry name" value="Arginosuc_syn_C"/>
    <property type="match status" value="1"/>
</dbReference>
<dbReference type="Pfam" id="PF00764">
    <property type="entry name" value="Arginosuc_synth"/>
    <property type="match status" value="1"/>
</dbReference>
<dbReference type="SUPFAM" id="SSF52402">
    <property type="entry name" value="Adenine nucleotide alpha hydrolases-like"/>
    <property type="match status" value="1"/>
</dbReference>
<dbReference type="SUPFAM" id="SSF69864">
    <property type="entry name" value="Argininosuccinate synthetase, C-terminal domain"/>
    <property type="match status" value="1"/>
</dbReference>
<dbReference type="PROSITE" id="PS00564">
    <property type="entry name" value="ARGININOSUCCIN_SYN_1"/>
    <property type="match status" value="1"/>
</dbReference>
<dbReference type="PROSITE" id="PS00565">
    <property type="entry name" value="ARGININOSUCCIN_SYN_2"/>
    <property type="match status" value="1"/>
</dbReference>
<reference key="1">
    <citation type="journal article" date="2002" name="DNA Res.">
        <title>Complete genome structure of the thermophilic cyanobacterium Thermosynechococcus elongatus BP-1.</title>
        <authorList>
            <person name="Nakamura Y."/>
            <person name="Kaneko T."/>
            <person name="Sato S."/>
            <person name="Ikeuchi M."/>
            <person name="Katoh H."/>
            <person name="Sasamoto S."/>
            <person name="Watanabe A."/>
            <person name="Iriguchi M."/>
            <person name="Kawashima K."/>
            <person name="Kimura T."/>
            <person name="Kishida Y."/>
            <person name="Kiyokawa C."/>
            <person name="Kohara M."/>
            <person name="Matsumoto M."/>
            <person name="Matsuno A."/>
            <person name="Nakazaki N."/>
            <person name="Shimpo S."/>
            <person name="Sugimoto M."/>
            <person name="Takeuchi C."/>
            <person name="Yamada M."/>
            <person name="Tabata S."/>
        </authorList>
    </citation>
    <scope>NUCLEOTIDE SEQUENCE [LARGE SCALE GENOMIC DNA]</scope>
    <source>
        <strain>NIES-2133 / IAM M-273 / BP-1</strain>
    </source>
</reference>
<protein>
    <recommendedName>
        <fullName evidence="1">Argininosuccinate synthase</fullName>
        <ecNumber evidence="1">6.3.4.5</ecNumber>
    </recommendedName>
    <alternativeName>
        <fullName evidence="1">Citrulline--aspartate ligase</fullName>
    </alternativeName>
</protein>
<evidence type="ECO:0000255" key="1">
    <source>
        <dbReference type="HAMAP-Rule" id="MF_00005"/>
    </source>
</evidence>
<proteinExistence type="inferred from homology"/>
<keyword id="KW-0028">Amino-acid biosynthesis</keyword>
<keyword id="KW-0055">Arginine biosynthesis</keyword>
<keyword id="KW-0067">ATP-binding</keyword>
<keyword id="KW-0963">Cytoplasm</keyword>
<keyword id="KW-0436">Ligase</keyword>
<keyword id="KW-0547">Nucleotide-binding</keyword>
<keyword id="KW-1185">Reference proteome</keyword>
<feature type="chain" id="PRO_0000148652" description="Argininosuccinate synthase">
    <location>
        <begin position="1"/>
        <end position="401"/>
    </location>
</feature>
<feature type="binding site" evidence="1">
    <location>
        <begin position="10"/>
        <end position="18"/>
    </location>
    <ligand>
        <name>ATP</name>
        <dbReference type="ChEBI" id="CHEBI:30616"/>
    </ligand>
</feature>
<feature type="binding site" evidence="1">
    <location>
        <position position="89"/>
    </location>
    <ligand>
        <name>L-citrulline</name>
        <dbReference type="ChEBI" id="CHEBI:57743"/>
    </ligand>
</feature>
<feature type="binding site" evidence="1">
    <location>
        <position position="119"/>
    </location>
    <ligand>
        <name>ATP</name>
        <dbReference type="ChEBI" id="CHEBI:30616"/>
    </ligand>
</feature>
<feature type="binding site" evidence="1">
    <location>
        <position position="121"/>
    </location>
    <ligand>
        <name>L-aspartate</name>
        <dbReference type="ChEBI" id="CHEBI:29991"/>
    </ligand>
</feature>
<feature type="binding site" evidence="1">
    <location>
        <position position="125"/>
    </location>
    <ligand>
        <name>L-aspartate</name>
        <dbReference type="ChEBI" id="CHEBI:29991"/>
    </ligand>
</feature>
<feature type="binding site" evidence="1">
    <location>
        <position position="125"/>
    </location>
    <ligand>
        <name>L-citrulline</name>
        <dbReference type="ChEBI" id="CHEBI:57743"/>
    </ligand>
</feature>
<feature type="binding site" evidence="1">
    <location>
        <position position="126"/>
    </location>
    <ligand>
        <name>L-aspartate</name>
        <dbReference type="ChEBI" id="CHEBI:29991"/>
    </ligand>
</feature>
<feature type="binding site" evidence="1">
    <location>
        <position position="129"/>
    </location>
    <ligand>
        <name>L-citrulline</name>
        <dbReference type="ChEBI" id="CHEBI:57743"/>
    </ligand>
</feature>
<feature type="binding site" evidence="1">
    <location>
        <position position="177"/>
    </location>
    <ligand>
        <name>L-citrulline</name>
        <dbReference type="ChEBI" id="CHEBI:57743"/>
    </ligand>
</feature>
<feature type="binding site" evidence="1">
    <location>
        <position position="186"/>
    </location>
    <ligand>
        <name>L-citrulline</name>
        <dbReference type="ChEBI" id="CHEBI:57743"/>
    </ligand>
</feature>
<feature type="binding site" evidence="1">
    <location>
        <position position="262"/>
    </location>
    <ligand>
        <name>L-citrulline</name>
        <dbReference type="ChEBI" id="CHEBI:57743"/>
    </ligand>
</feature>
<feature type="binding site" evidence="1">
    <location>
        <position position="274"/>
    </location>
    <ligand>
        <name>L-citrulline</name>
        <dbReference type="ChEBI" id="CHEBI:57743"/>
    </ligand>
</feature>
<gene>
    <name evidence="1" type="primary">argG</name>
    <name type="ordered locus">tlr0712</name>
</gene>
<sequence>MGRAEKVILAYSGGVDTSVCIPYLQHEWGVKEVITLAVDLGQGDELEPIRQKALDAGASASLVADAKAEFIRNYAFPAIQANALYENRYPLSTALARPLIAKLLVEAATQYGADAVAHGCTGKGNDQVRFDVAIAALNPNLKVLAPAREWGMSREETIAYGERFGIPAPVKKSSPYSIDRNLLGRSIEAGPLEDPWMEPLEEVYWMTQAIEHTPNSPEYVDIGFEAGVPVSLDGRPLDPVTLVSELNERVGRHGFGRIDMIENRLVGIKSREIYEAPGLLVLIDAHRDLESLTLTADVMHYKRGIEETYSRLVYNGLWYSPLKEALDAFIQQTQQRVTGTVRVKLFKGTARVVGRQSPYSLYTPDLATYGAEDQFDHRAAEGFIYVWGLPTRVWAEKLRQG</sequence>